<accession>P0DO35</accession>
<comment type="function">
    <text evidence="4 7">Involved in the biosynthesis of phenolic monoterpenes natural products thymol and carvacrol which have a broad range of biological activities acting as antimicrobial compounds, insecticides, antioxidants and pharmaceutical agents (PubMed:26156773, Ref.1). Catalyzes the C2- and C3-hydroxylation of gamma-terpinene to produce carvacrol and thymol, respectively (Ref.1). Also mediates the C6-hydroxylation of (4S)-limonene to form carveol and the C3-hydroxylation of (4R)-limonene to generate (+)-trans-isopiperitenol (Ref.1).</text>
</comment>
<comment type="catalytic activity">
    <reaction evidence="7">
        <text>(4S)-limonene + reduced [NADPH--hemoprotein reductase] + O2 = (1S,5R)-carveol + oxidized [NADPH--hemoprotein reductase] + H2O + H(+)</text>
        <dbReference type="Rhea" id="RHEA:17945"/>
        <dbReference type="Rhea" id="RHEA-COMP:11964"/>
        <dbReference type="Rhea" id="RHEA-COMP:11965"/>
        <dbReference type="ChEBI" id="CHEBI:15377"/>
        <dbReference type="ChEBI" id="CHEBI:15378"/>
        <dbReference type="ChEBI" id="CHEBI:15379"/>
        <dbReference type="ChEBI" id="CHEBI:15383"/>
        <dbReference type="ChEBI" id="CHEBI:15389"/>
        <dbReference type="ChEBI" id="CHEBI:57618"/>
        <dbReference type="ChEBI" id="CHEBI:58210"/>
        <dbReference type="EC" id="1.14.14.51"/>
    </reaction>
    <physiologicalReaction direction="left-to-right" evidence="7">
        <dbReference type="Rhea" id="RHEA:17946"/>
    </physiologicalReaction>
</comment>
<comment type="catalytic activity">
    <reaction evidence="7">
        <text>gamma-terpinene + 2 reduced [NADPH--hemoprotein reductase] + 2 O2 = carvacrol + 2 oxidized [NADPH--hemoprotein reductase] + 3 H2O + 2 H(+)</text>
        <dbReference type="Rhea" id="RHEA:67404"/>
        <dbReference type="Rhea" id="RHEA-COMP:11964"/>
        <dbReference type="Rhea" id="RHEA-COMP:11965"/>
        <dbReference type="ChEBI" id="CHEBI:3440"/>
        <dbReference type="ChEBI" id="CHEBI:10577"/>
        <dbReference type="ChEBI" id="CHEBI:15377"/>
        <dbReference type="ChEBI" id="CHEBI:15378"/>
        <dbReference type="ChEBI" id="CHEBI:15379"/>
        <dbReference type="ChEBI" id="CHEBI:57618"/>
        <dbReference type="ChEBI" id="CHEBI:58210"/>
    </reaction>
    <physiologicalReaction direction="left-to-right" evidence="7">
        <dbReference type="Rhea" id="RHEA:67405"/>
    </physiologicalReaction>
</comment>
<comment type="catalytic activity">
    <reaction evidence="7">
        <text>gamma-terpinene + 2 reduced [NADPH--hemoprotein reductase] + 2 O2 = thymol + 2 oxidized [NADPH--hemoprotein reductase] + 3 H2O + 2 H(+)</text>
        <dbReference type="Rhea" id="RHEA:67408"/>
        <dbReference type="Rhea" id="RHEA-COMP:11964"/>
        <dbReference type="Rhea" id="RHEA-COMP:11965"/>
        <dbReference type="ChEBI" id="CHEBI:10577"/>
        <dbReference type="ChEBI" id="CHEBI:15377"/>
        <dbReference type="ChEBI" id="CHEBI:15378"/>
        <dbReference type="ChEBI" id="CHEBI:15379"/>
        <dbReference type="ChEBI" id="CHEBI:27607"/>
        <dbReference type="ChEBI" id="CHEBI:57618"/>
        <dbReference type="ChEBI" id="CHEBI:58210"/>
    </reaction>
    <physiologicalReaction direction="left-to-right" evidence="7">
        <dbReference type="Rhea" id="RHEA:67409"/>
    </physiologicalReaction>
</comment>
<comment type="catalytic activity">
    <reaction evidence="7">
        <text>(4R)-limonene + reduced [NADPH--hemoprotein reductase] + O2 = (1R,6S)-isopiperitenol + oxidized [NADPH--hemoprotein reductase] + H2O + H(+)</text>
        <dbReference type="Rhea" id="RHEA:67416"/>
        <dbReference type="Rhea" id="RHEA-COMP:11964"/>
        <dbReference type="Rhea" id="RHEA-COMP:11965"/>
        <dbReference type="ChEBI" id="CHEBI:15377"/>
        <dbReference type="ChEBI" id="CHEBI:15378"/>
        <dbReference type="ChEBI" id="CHEBI:15379"/>
        <dbReference type="ChEBI" id="CHEBI:15382"/>
        <dbReference type="ChEBI" id="CHEBI:57618"/>
        <dbReference type="ChEBI" id="CHEBI:58210"/>
        <dbReference type="ChEBI" id="CHEBI:169979"/>
    </reaction>
    <physiologicalReaction direction="left-to-right" evidence="7">
        <dbReference type="Rhea" id="RHEA:67417"/>
    </physiologicalReaction>
</comment>
<comment type="cofactor">
    <cofactor evidence="2">
        <name>heme</name>
        <dbReference type="ChEBI" id="CHEBI:30413"/>
    </cofactor>
</comment>
<comment type="biophysicochemical properties">
    <kinetics>
        <KM evidence="7">37.2 uM for gamma-terpinene</KM>
    </kinetics>
    <phDependence>
        <text evidence="7">Optimum pH is 6.8-7.</text>
    </phDependence>
</comment>
<comment type="pathway">
    <text evidence="1">Secondary metabolite biosynthesis; terpenoid biosynthesis.</text>
</comment>
<comment type="subcellular location">
    <subcellularLocation>
        <location evidence="3">Membrane</location>
        <topology evidence="18">Single-pass type II membrane protein</topology>
    </subcellularLocation>
</comment>
<comment type="tissue specificity">
    <text evidence="5 8">Expressed in flowers, leaves and stems, especially in glandular trichomes.</text>
</comment>
<comment type="induction">
    <text evidence="4 5 6">Induced by jasmonic acid (MeJA), salicylic acid (SA) and UV-C irradiation (PubMed:28365519). Accumulates upon root colonization by Myrmica ants (Myrmica sabuleti and Myrmica scabrinodis) concomitantly with jasmonates induction; this leads to the production of carvacrol, an attractant for the phytophagous-predaceous butterfly Maculinea arion, whose larvae initially feed on Origanum vulgare flowerheads before switching to parasitize Myrmica ant colonies for their main period of growth (PubMed:26156773). Slightly repressed by Spodoptera littoralis, a herbivory insect (PubMed:30231481).</text>
</comment>
<comment type="biotechnology">
    <text evidence="10 11 14 16">The monoterpenic phenol thymol is widely used as a fragrance and a flavoring ingredient in food and cosmetic industries (PubMed:29785774). Its derivatives have also several biological and pharmacological properties such as antimicrobial, antioxidant, anticarcinogenesis, anti-inflammatory and antispasmodic activities (PubMed:29785774, PubMed:29874939). Medical applications include the treatment of disorders affecting the respiratory, nervous, and cardiovascular systems (PubMed:29785774). It may also act as a growth enhancer and immunomodulator (PubMed:29785774). Thymol may also have antiviral activity toward COVID-19 by binding to the S1 receptor binding domain of the SARS-CoV-2 spike (S) glycoprotein (PubMed:32834111, PubMed:33855010).</text>
</comment>
<comment type="biotechnology">
    <text evidence="9 11 12 13 14 15 16">The monoterpenic phenol carvacrol is commonly used as a fragrance and a food flavoring ingredient and preservative (PubMed:24915411). Its derivatives exhibit also various biological and pharmacological properties including antioxidant, antibacterial, antifungal, insecticid, nematicid, anticancer, anti-inflammatory, hepatoprotective, spasmolytic, and vasorelaxant (PubMed:24915411, PubMed:29874939, PubMed:30836858, PubMed:33664752). Phytochemical inhibitor targeting the main SARS-CoV-2 viral protease (Mpro) and ACE2 in human host cells, carvacrol is a possible candidate for treating COVID-19 (PubMed:32448034, PubMed:33664752). Carvacrol may also have antiviral activity toward COVID-19 by binding to the S1 receptor binding domain of the SARS-CoV-2 spike (S) glycoprotein (PubMed:32834111, PubMed:33855010).</text>
</comment>
<comment type="similarity">
    <text evidence="18">Belongs to the cytochrome P450 family.</text>
</comment>
<sequence>MDISISWVVIILLVLSYLILMEKWRAAKLPKNLPPGPPKLPVIGHLHLLGGGLPQHVLRGITQKYGPVAHVQLGEVSSVVLSSTEAARQAMKVLDPAFADRFVNIGSRIMWYDSEDIIFSRYNDHWRQIRKICVSELLSPKNVKSFGYIRQDEMARLIRLFESSEGAAINVSEEISKTVCTIVSRVAFGSVVKDQSLLLNLVKESLRMASGFELADLFPSSWLLNLLCFNKYRLWGMRRRLDNFLDGFLEEHRVKKSGEYGGEDIIDVLYRMQKDSQMKVPITNNGIKGFIYDVFSAGTDTSAATILWALSELMRNPEKMAKAQAEVREILKGKTNVDMAEVHELKYLRSVVKEALRLHPPFPIIPRLCIQESEVTGYTIPANTRILINVWSIGRDPLYWNEPDTFNPDRYDEVPRDIIGNDFELIPFGSGRRICPGLHFGLANIEVPLAQLLYHFDWKLPQGMTAADIDMTEKPGLSGPRKNPLILVPTIHNPTS</sequence>
<reference key="1">
    <citation type="thesis" date="2011" institute="Friedrich Schiller University of Jena" country="Germany">
        <title>Biosynthesis of the phenolic monoterpenes, thymol and carvacrol, by terpene synthases and cytochrome P450s in oregano and thyme.</title>
        <authorList>
            <person name="Crocoll C."/>
        </authorList>
    </citation>
    <scope>NUCLEOTIDE SEQUENCE [MRNA]</scope>
    <scope>FUNCTION</scope>
    <scope>CATALYTIC ACTIVITY</scope>
    <scope>BIOPHYSICOCHEMICAL PROPERTIES</scope>
    <scope>PATHWAY</scope>
    <source>
        <strain>cv. d06-01</strain>
        <strain>cv. f02-04</strain>
        <tissue>Trichome gland</tissue>
    </source>
</reference>
<reference key="2">
    <citation type="journal article" date="2015" name="Crit. Rev. Food Sci. Nutr.">
        <title>The bioactivity and toxicological actions of carvacrol.</title>
        <authorList>
            <person name="Suntres Z.E."/>
            <person name="Coccimiglio J."/>
            <person name="Alipour M."/>
        </authorList>
    </citation>
    <scope>REVIEW ON CARVACROL</scope>
    <scope>BIOTECHNOLOGY</scope>
</reference>
<reference key="3">
    <citation type="journal article" date="2015" name="Proc. R. Soc. B">
        <title>Plant defences against ants provide a pathway to social parasitism in butterflies.</title>
        <authorList>
            <person name="Patricelli D."/>
            <person name="Barbero F."/>
            <person name="Occhipinti A."/>
            <person name="Bertea C.M."/>
            <person name="Bonelli S."/>
            <person name="Casacci L.P."/>
            <person name="Zebelo S.A."/>
            <person name="Crocoll C."/>
            <person name="Gershenzon J."/>
            <person name="Maffei M.E."/>
            <person name="Thomas J.A."/>
            <person name="Balletto E."/>
        </authorList>
    </citation>
    <scope>FUNCTION</scope>
    <scope>INDUCTION BY MYRMICA ANTS</scope>
</reference>
<reference key="4">
    <citation type="journal article" date="2017" name="Plant Physiol. Biochem.">
        <title>Tissue-specific gene-expression patterns of genes associated with thymol/carvacrol biosynthesis in thyme (Thymus vulgaris L.) and their differential changes upon treatment with abiotic elicitors.</title>
        <authorList>
            <person name="Majdi M."/>
            <person name="Malekzadeh-Mashhady A."/>
            <person name="Maroufi A."/>
            <person name="Crocoll C."/>
        </authorList>
    </citation>
    <scope>TISSUE SPECIFICITY</scope>
    <scope>INDUCTION BY JASMONIC ACID; SALICYLIC ACID AND UV-C</scope>
</reference>
<reference key="5">
    <citation type="journal article" date="2018" name="Ind. Crops Prod.">
        <title>Divergence in tissue-specific expression patterns of genes associated with the terpenoid biosynthesis in two oregano species Origanum vulgare L., and Origanum majorana.</title>
        <authorList>
            <person name="Jan S."/>
            <person name="Mir J.I."/>
            <person name="Shafi W."/>
            <person name="Faktoo S.Z."/>
            <person name="Singh D.B."/>
            <person name="Wijaya L."/>
            <person name="Alyemeni M.N."/>
            <person name="Ahmad P."/>
        </authorList>
    </citation>
    <scope>TISSUE SPECIFICITY</scope>
</reference>
<reference key="6">
    <citation type="journal article" date="2018" name="Int. J. Mol. Sci.">
        <title>Origanum vulgare Terpenoids Induce Oxidative stress and reduce the feeding activity of Spodoptera littoralis.</title>
        <authorList>
            <person name="Agliassa C."/>
            <person name="Maffei M.E."/>
        </authorList>
    </citation>
    <scope>REPRESSION BY SPODOPTERA LITTORALIS</scope>
</reference>
<reference key="7">
    <citation type="journal article" date="2018" name="Phytother. Res.">
        <title>Thymol, thyme, and other plant sources: Health and potential uses.</title>
        <authorList>
            <person name="Salehi B."/>
            <person name="Mishra A.P."/>
            <person name="Shukla I."/>
            <person name="Sharifi-Rad M."/>
            <person name="Contreras M.D.M."/>
            <person name="Segura-Carretero A."/>
            <person name="Fathi H."/>
            <person name="Nasrabadi N.N."/>
            <person name="Kobarfard F."/>
            <person name="Sharifi-Rad J."/>
        </authorList>
    </citation>
    <scope>REVIEW ON THYMOL</scope>
    <scope>BIOTECHNOLOGY</scope>
</reference>
<reference key="8">
    <citation type="journal article" date="2019" name="Nat. Prod. Res.">
        <title>Synthesis and antifungal activity of carvacrol and thymol esters with heteroaromatic carboxylic acids.</title>
        <authorList>
            <person name="Wang K."/>
            <person name="Jiang S."/>
            <person name="Yang Y."/>
            <person name="Fan L."/>
            <person name="Su F."/>
            <person name="Ye M."/>
        </authorList>
    </citation>
    <scope>REVIEW ON CARVACROL AND THYMOL</scope>
    <scope>BIOTECHNOLOGY</scope>
</reference>
<reference key="9">
    <citation type="journal article" date="2020" name="Front. Plant Sci.">
        <title>Carvacrol, a plant metabolite targeting viral protease (Mpro) and ACE2 in host cells can be a possible candidate for COVID-19.</title>
        <authorList>
            <person name="Javed H."/>
            <person name="Meeran M.F.N."/>
            <person name="Jha N.K."/>
            <person name="Ojha S."/>
        </authorList>
    </citation>
    <scope>REVIEW ON CARVACROL EFFECTS ON COVID-19</scope>
    <scope>BIOTECHNOLOGY</scope>
</reference>
<reference key="10">
    <citation type="journal article" date="2020" name="J. Biomol. Struct. Dyn.">
        <title>Identification of phytochemical inhibitors against main protease of COVID-19 using molecular modeling approaches.</title>
        <authorList>
            <person name="Kumar A."/>
            <person name="Choudhir G."/>
            <person name="Shukla S.K."/>
            <person name="Sharma M."/>
            <person name="Tyagi P."/>
            <person name="Bhushan A."/>
            <person name="Rathore M."/>
        </authorList>
    </citation>
    <scope>REVIEW ON CARVACROL EFFECTS ON COVID-19</scope>
    <scope>BIOTECHNOLOGY</scope>
</reference>
<reference key="11">
    <citation type="journal article" date="2020" name="J. Biomol. Struct. Dyn.">
        <title>Synthesis, anticholinesterase activity and molecular modeling studies of novel carvacrol-substituted amide derivatives.</title>
        <authorList>
            <person name="Zengin Kurt B."/>
            <person name="Durdagi S."/>
            <person name="Celebi G."/>
            <person name="Ekhteiari Salmas R."/>
            <person name="Sonmez F."/>
        </authorList>
    </citation>
    <scope>REVIEW ON CARVACROL DERIVATIVES</scope>
    <scope>BIOTECHNOLOGY</scope>
</reference>
<reference key="12">
    <citation type="journal article" date="2020" name="J. Mol. Struct.">
        <title>Computational evaluation of major components from plant essential oils as potent inhibitors of SARS-CoV-2 spike protein.</title>
        <authorList>
            <person name="Kulkarni S.A."/>
            <person name="Nagarajan S.K."/>
            <person name="Ramesh V."/>
            <person name="Palaniyandi V."/>
            <person name="Selvam S.P."/>
            <person name="Madhavan T."/>
        </authorList>
    </citation>
    <scope>REVIEW ON PLANT ESSENTIAL OILS EFFECTS ON COVID-19</scope>
    <scope>BIOTECHNOLOGY</scope>
</reference>
<reference key="13">
    <citation type="journal article" date="2021" name="Front. Chem.">
        <title>Antiviral essential oil components against SARS-CoV-2 in pre-procedural mouth rinses for dental settings during COVID-19: A computational study.</title>
        <authorList>
            <person name="Yadalam P.K."/>
            <person name="Varatharajan K."/>
            <person name="Rajapandian K."/>
            <person name="Chopra P."/>
            <person name="Arumuganainar D."/>
            <person name="Nagarathnam T."/>
            <person name="Sohn H."/>
            <person name="Madhavan T."/>
        </authorList>
    </citation>
    <scope>REVIEW ON PLANT ESSENTIAL OILS EFFECTS ON COVID-19</scope>
    <scope>BIOTECHNOLOGY</scope>
</reference>
<gene>
    <name evidence="17" type="primary">CYP71D178</name>
</gene>
<proteinExistence type="evidence at protein level"/>
<dbReference type="EC" id="1.14.14.-" evidence="7"/>
<dbReference type="EC" id="1.14.14.51" evidence="7"/>
<dbReference type="SMR" id="P0DO35"/>
<dbReference type="UniPathway" id="UPA00213"/>
<dbReference type="GO" id="GO:0016020">
    <property type="term" value="C:membrane"/>
    <property type="evidence" value="ECO:0007669"/>
    <property type="project" value="UniProtKB-SubCell"/>
</dbReference>
<dbReference type="GO" id="GO:0020037">
    <property type="term" value="F:heme binding"/>
    <property type="evidence" value="ECO:0007669"/>
    <property type="project" value="InterPro"/>
</dbReference>
<dbReference type="GO" id="GO:0005506">
    <property type="term" value="F:iron ion binding"/>
    <property type="evidence" value="ECO:0007669"/>
    <property type="project" value="InterPro"/>
</dbReference>
<dbReference type="GO" id="GO:0004497">
    <property type="term" value="F:monooxygenase activity"/>
    <property type="evidence" value="ECO:0007669"/>
    <property type="project" value="UniProtKB-KW"/>
</dbReference>
<dbReference type="GO" id="GO:0016705">
    <property type="term" value="F:oxidoreductase activity, acting on paired donors, with incorporation or reduction of molecular oxygen"/>
    <property type="evidence" value="ECO:0007669"/>
    <property type="project" value="InterPro"/>
</dbReference>
<dbReference type="GO" id="GO:0002213">
    <property type="term" value="P:defense response to insect"/>
    <property type="evidence" value="ECO:0000270"/>
    <property type="project" value="UniProtKB"/>
</dbReference>
<dbReference type="GO" id="GO:0009625">
    <property type="term" value="P:response to insect"/>
    <property type="evidence" value="ECO:0000270"/>
    <property type="project" value="UniProtKB"/>
</dbReference>
<dbReference type="GO" id="GO:0009753">
    <property type="term" value="P:response to jasmonic acid"/>
    <property type="evidence" value="ECO:0000270"/>
    <property type="project" value="UniProtKB"/>
</dbReference>
<dbReference type="GO" id="GO:0009751">
    <property type="term" value="P:response to salicylic acid"/>
    <property type="evidence" value="ECO:0000270"/>
    <property type="project" value="UniProtKB"/>
</dbReference>
<dbReference type="GO" id="GO:0010225">
    <property type="term" value="P:response to UV-C"/>
    <property type="evidence" value="ECO:0000270"/>
    <property type="project" value="UniProtKB"/>
</dbReference>
<dbReference type="GO" id="GO:0016114">
    <property type="term" value="P:terpenoid biosynthetic process"/>
    <property type="evidence" value="ECO:0007669"/>
    <property type="project" value="UniProtKB-UniPathway"/>
</dbReference>
<dbReference type="CDD" id="cd11072">
    <property type="entry name" value="CYP71-like"/>
    <property type="match status" value="1"/>
</dbReference>
<dbReference type="FunFam" id="1.10.630.10:FF:000043">
    <property type="entry name" value="Cytochrome P450 99A2"/>
    <property type="match status" value="1"/>
</dbReference>
<dbReference type="Gene3D" id="1.10.630.10">
    <property type="entry name" value="Cytochrome P450"/>
    <property type="match status" value="1"/>
</dbReference>
<dbReference type="InterPro" id="IPR052306">
    <property type="entry name" value="CYP450_71D"/>
</dbReference>
<dbReference type="InterPro" id="IPR001128">
    <property type="entry name" value="Cyt_P450"/>
</dbReference>
<dbReference type="InterPro" id="IPR017972">
    <property type="entry name" value="Cyt_P450_CS"/>
</dbReference>
<dbReference type="InterPro" id="IPR002401">
    <property type="entry name" value="Cyt_P450_E_grp-I"/>
</dbReference>
<dbReference type="InterPro" id="IPR036396">
    <property type="entry name" value="Cyt_P450_sf"/>
</dbReference>
<dbReference type="PANTHER" id="PTHR47953:SF19">
    <property type="entry name" value="OS06G0641600 PROTEIN"/>
    <property type="match status" value="1"/>
</dbReference>
<dbReference type="PANTHER" id="PTHR47953">
    <property type="entry name" value="OS08G0105600 PROTEIN"/>
    <property type="match status" value="1"/>
</dbReference>
<dbReference type="Pfam" id="PF00067">
    <property type="entry name" value="p450"/>
    <property type="match status" value="1"/>
</dbReference>
<dbReference type="PRINTS" id="PR00463">
    <property type="entry name" value="EP450I"/>
</dbReference>
<dbReference type="PRINTS" id="PR00385">
    <property type="entry name" value="P450"/>
</dbReference>
<dbReference type="SUPFAM" id="SSF48264">
    <property type="entry name" value="Cytochrome P450"/>
    <property type="match status" value="1"/>
</dbReference>
<dbReference type="PROSITE" id="PS00086">
    <property type="entry name" value="CYTOCHROME_P450"/>
    <property type="match status" value="1"/>
</dbReference>
<organism>
    <name type="scientific">Origanum vulgare</name>
    <name type="common">Wild marjoram</name>
    <dbReference type="NCBI Taxonomy" id="39352"/>
    <lineage>
        <taxon>Eukaryota</taxon>
        <taxon>Viridiplantae</taxon>
        <taxon>Streptophyta</taxon>
        <taxon>Embryophyta</taxon>
        <taxon>Tracheophyta</taxon>
        <taxon>Spermatophyta</taxon>
        <taxon>Magnoliopsida</taxon>
        <taxon>eudicotyledons</taxon>
        <taxon>Gunneridae</taxon>
        <taxon>Pentapetalae</taxon>
        <taxon>asterids</taxon>
        <taxon>lamiids</taxon>
        <taxon>Lamiales</taxon>
        <taxon>Lamiaceae</taxon>
        <taxon>Nepetoideae</taxon>
        <taxon>Mentheae</taxon>
        <taxon>Origanum</taxon>
    </lineage>
</organism>
<evidence type="ECO:0000250" key="1">
    <source>
        <dbReference type="UniProtKB" id="A0A165U5Z9"/>
    </source>
</evidence>
<evidence type="ECO:0000250" key="2">
    <source>
        <dbReference type="UniProtKB" id="Q96242"/>
    </source>
</evidence>
<evidence type="ECO:0000255" key="3"/>
<evidence type="ECO:0000269" key="4">
    <source>
    </source>
</evidence>
<evidence type="ECO:0000269" key="5">
    <source>
    </source>
</evidence>
<evidence type="ECO:0000269" key="6">
    <source>
    </source>
</evidence>
<evidence type="ECO:0000269" key="7">
    <source ref="1"/>
</evidence>
<evidence type="ECO:0000269" key="8">
    <source ref="5"/>
</evidence>
<evidence type="ECO:0000303" key="9">
    <source>
    </source>
</evidence>
<evidence type="ECO:0000303" key="10">
    <source>
    </source>
</evidence>
<evidence type="ECO:0000303" key="11">
    <source>
    </source>
</evidence>
<evidence type="ECO:0000303" key="12">
    <source>
    </source>
</evidence>
<evidence type="ECO:0000303" key="13">
    <source>
    </source>
</evidence>
<evidence type="ECO:0000303" key="14">
    <source>
    </source>
</evidence>
<evidence type="ECO:0000303" key="15">
    <source>
    </source>
</evidence>
<evidence type="ECO:0000303" key="16">
    <source>
    </source>
</evidence>
<evidence type="ECO:0000303" key="17">
    <source ref="1"/>
</evidence>
<evidence type="ECO:0000305" key="18"/>
<evidence type="ECO:0000305" key="19">
    <source ref="1"/>
</evidence>
<protein>
    <recommendedName>
        <fullName evidence="17">Cytochrome P450 71D178</fullName>
    </recommendedName>
    <alternativeName>
        <fullName evidence="19">(+)-trans-isopiperitenol synthase</fullName>
        <ecNumber evidence="7">1.14.14.-</ecNumber>
    </alternativeName>
    <alternativeName>
        <fullName evidence="19">Carvacrol synthase</fullName>
        <ecNumber evidence="7">1.14.14.-</ecNumber>
    </alternativeName>
    <alternativeName>
        <fullName evidence="19">Carveol synthase</fullName>
        <ecNumber evidence="7">1.14.14.51</ecNumber>
    </alternativeName>
    <alternativeName>
        <fullName evidence="19">Gamma-terpinene hydroxylase</fullName>
    </alternativeName>
    <alternativeName>
        <fullName evidence="19">Limonene hydroxylase</fullName>
    </alternativeName>
    <alternativeName>
        <fullName evidence="19">Thymol synthase</fullName>
        <ecNumber evidence="7">1.14.14.-</ecNumber>
    </alternativeName>
</protein>
<name>CP178_ORIVU</name>
<keyword id="KW-0349">Heme</keyword>
<keyword id="KW-0408">Iron</keyword>
<keyword id="KW-0472">Membrane</keyword>
<keyword id="KW-0479">Metal-binding</keyword>
<keyword id="KW-0503">Monooxygenase</keyword>
<keyword id="KW-0560">Oxidoreductase</keyword>
<keyword id="KW-0735">Signal-anchor</keyword>
<keyword id="KW-0812">Transmembrane</keyword>
<keyword id="KW-1133">Transmembrane helix</keyword>
<feature type="chain" id="PRO_0000453322" description="Cytochrome P450 71D178">
    <location>
        <begin position="1"/>
        <end position="496"/>
    </location>
</feature>
<feature type="transmembrane region" description="Helical; Signal-anchor for type II membrane protein" evidence="3">
    <location>
        <begin position="1"/>
        <end position="21"/>
    </location>
</feature>
<feature type="binding site" description="axial binding residue" evidence="2">
    <location>
        <position position="435"/>
    </location>
    <ligand>
        <name>heme</name>
        <dbReference type="ChEBI" id="CHEBI:30413"/>
    </ligand>
    <ligandPart>
        <name>Fe</name>
        <dbReference type="ChEBI" id="CHEBI:18248"/>
    </ligandPart>
</feature>